<proteinExistence type="inferred from homology"/>
<evidence type="ECO:0000250" key="1">
    <source>
        <dbReference type="UniProtKB" id="P94692"/>
    </source>
</evidence>
<evidence type="ECO:0000255" key="2">
    <source>
        <dbReference type="PROSITE-ProRule" id="PRU00711"/>
    </source>
</evidence>
<evidence type="ECO:0000305" key="3"/>
<sequence length="1191" mass="127817">MSVRKMVAIDGNEACASVAYRVSEVAVIYPITPSSTMGELSDEWSAKGLTNIWGAVPQVVEMQSEGGAAGACHGAIQTGSLGTTFTASQGLLLMIPNMYKIAGELTPFCMHVTARTLATHALSIFGDQSDVMACRQTGFAILASASVQEAHDLASVAHGASLESRIPFLHFFDGFRTSHEVNKIELMTDDDLHAMIDDDLVAAHRARALTPDTPVTRGTAQNPDTFFQAQEARNPFYDACPAIVQSYMDRLAALTGRRYGLFDYVGHPQAERVVVIMGSGAETVAETVDWLVARGEKIGVVKVRLFRPFSVDAFVAALPVSVRAIAVLDRCKESGAIGEPLYLDVVGALARAKALGLRAGIVDPAVIGGRYGLSSKEFTPAMVKAIFDELAKANPKQAFTVGIEDDVTHLSLSVDRSFRIESADIKRSVFFGLGADGTVGANKNSIKIISDSPTIHGQGYFVYDSKKSGAITISHLRFGPRPIRAPYLIDEADFIACHHFSFLDKVDVLETAAVGATLLLNSPHDKDTVWDALPRPVQQTIIDRDLKLFVIDANKVAQETGMGQRINTIMQTCFFALSGVMPRDEAIEEIKKAISKTYARKSQKVIDANFAAVDQTLSRLQSVTIPGVLTGHALPPLVSAGAPDFVRNVTAVMLAGKGDSLPVSAMPVDGTWPTETARWEKRDIAQQVCSWDADLCIQCNKCVMVCPHAALRVKAVPAEAAAALPASMNSTPYKGKDDLKGSAYVLALSPEDCTGCGICVEACPGKDKATGARSLTMHAREDVVSACKENWEIFLDLPDVARTSLRPTVKNSQFMTPLFEFSGACQGCGETPYLKLLTQMWGDRLMIANATGCSSIYGGNLPTSPYAKDANGRGPAWSNSLFEDNAEFGLGFRLALDQHRSEAKRLLGALAPQLSGVLVDGLVANAANNDEAAIAAQRERVVSLRAELGGLTGWQARALEGLADYLVEKVVWIVGGDGWAYDIGYGGLDHVISSGRNVNILVMDTEVYSNTGGQQSKSTPIGASAKFSVAGKALPKKDLGQIAMANGHVYVASIAFGASDNQTLRALSEAVSYEGPSLIIAYSHCIAHGYDLTCGLSQQKLAIETGYWPLYRFDPRKMGVGPALSLDGVQPSRPIGDYMANEGRFRIIRDADPERYAMLLEAAEENVRSRWALLRQLAGVADEQEGARAAQ</sequence>
<organism>
    <name type="scientific">Rhodospirillum rubrum (strain ATCC 11170 / ATH 1.1.1 / DSM 467 / LMG 4362 / NCIMB 8255 / S1)</name>
    <dbReference type="NCBI Taxonomy" id="269796"/>
    <lineage>
        <taxon>Bacteria</taxon>
        <taxon>Pseudomonadati</taxon>
        <taxon>Pseudomonadota</taxon>
        <taxon>Alphaproteobacteria</taxon>
        <taxon>Rhodospirillales</taxon>
        <taxon>Rhodospirillaceae</taxon>
        <taxon>Rhodospirillum</taxon>
    </lineage>
</organism>
<gene>
    <name type="primary">nifJ</name>
    <name type="ordered locus">Rru_A2398</name>
</gene>
<reference key="1">
    <citation type="journal article" date="1996" name="Mol. Microbiol.">
        <title>Identification and sequence of a nifJ-like gene in Rhodospirillum rubrum: partial characterization of a mutant unaffected in nitrogen fixation.</title>
        <authorList>
            <person name="Lindblad A."/>
            <person name="Jansson J."/>
            <person name="Brostedt E."/>
            <person name="Johansson M."/>
            <person name="Hellman U."/>
            <person name="Nordlund S."/>
        </authorList>
    </citation>
    <scope>NUCLEOTIDE SEQUENCE [GENOMIC DNA]</scope>
</reference>
<reference key="2">
    <citation type="journal article" date="2011" name="Stand. Genomic Sci.">
        <title>Complete genome sequence of Rhodospirillum rubrum type strain (S1).</title>
        <authorList>
            <person name="Munk A.C."/>
            <person name="Copeland A."/>
            <person name="Lucas S."/>
            <person name="Lapidus A."/>
            <person name="Del Rio T.G."/>
            <person name="Barry K."/>
            <person name="Detter J.C."/>
            <person name="Hammon N."/>
            <person name="Israni S."/>
            <person name="Pitluck S."/>
            <person name="Brettin T."/>
            <person name="Bruce D."/>
            <person name="Han C."/>
            <person name="Tapia R."/>
            <person name="Gilna P."/>
            <person name="Schmutz J."/>
            <person name="Larimer F."/>
            <person name="Land M."/>
            <person name="Kyrpides N.C."/>
            <person name="Mavromatis K."/>
            <person name="Richardson P."/>
            <person name="Rohde M."/>
            <person name="Goeker M."/>
            <person name="Klenk H.P."/>
            <person name="Zhang Y."/>
            <person name="Roberts G.P."/>
            <person name="Reslewic S."/>
            <person name="Schwartz D.C."/>
        </authorList>
    </citation>
    <scope>NUCLEOTIDE SEQUENCE [LARGE SCALE GENOMIC DNA]</scope>
    <source>
        <strain>ATCC 11170 / ATH 1.1.1 / DSM 467 / LMG 4362 / NCIMB 8255 / S1</strain>
    </source>
</reference>
<feature type="chain" id="PRO_0000215556" description="Pyruvate-flavodoxin oxidoreductase">
    <location>
        <begin position="1"/>
        <end position="1191"/>
    </location>
</feature>
<feature type="domain" description="4Fe-4S ferredoxin-type 1" evidence="2">
    <location>
        <begin position="687"/>
        <end position="716"/>
    </location>
</feature>
<feature type="domain" description="4Fe-4S ferredoxin-type 2" evidence="2">
    <location>
        <begin position="744"/>
        <end position="773"/>
    </location>
</feature>
<feature type="binding site" evidence="1">
    <location>
        <position position="696"/>
    </location>
    <ligand>
        <name>[4Fe-4S] cluster</name>
        <dbReference type="ChEBI" id="CHEBI:49883"/>
        <label>1</label>
    </ligand>
</feature>
<feature type="binding site" evidence="1">
    <location>
        <position position="699"/>
    </location>
    <ligand>
        <name>[4Fe-4S] cluster</name>
        <dbReference type="ChEBI" id="CHEBI:49883"/>
        <label>1</label>
    </ligand>
</feature>
<feature type="binding site" evidence="1">
    <location>
        <position position="702"/>
    </location>
    <ligand>
        <name>[4Fe-4S] cluster</name>
        <dbReference type="ChEBI" id="CHEBI:49883"/>
        <label>1</label>
    </ligand>
</feature>
<feature type="binding site" evidence="1">
    <location>
        <position position="706"/>
    </location>
    <ligand>
        <name>[4Fe-4S] cluster</name>
        <dbReference type="ChEBI" id="CHEBI:49883"/>
        <label>2</label>
    </ligand>
</feature>
<feature type="binding site" evidence="1">
    <location>
        <position position="753"/>
    </location>
    <ligand>
        <name>[4Fe-4S] cluster</name>
        <dbReference type="ChEBI" id="CHEBI:49883"/>
        <label>2</label>
    </ligand>
</feature>
<feature type="binding site" evidence="1">
    <location>
        <position position="756"/>
    </location>
    <ligand>
        <name>[4Fe-4S] cluster</name>
        <dbReference type="ChEBI" id="CHEBI:49883"/>
        <label>2</label>
    </ligand>
</feature>
<feature type="binding site" evidence="1">
    <location>
        <position position="759"/>
    </location>
    <ligand>
        <name>[4Fe-4S] cluster</name>
        <dbReference type="ChEBI" id="CHEBI:49883"/>
        <label>2</label>
    </ligand>
</feature>
<feature type="binding site" evidence="1">
    <location>
        <position position="763"/>
    </location>
    <ligand>
        <name>[4Fe-4S] cluster</name>
        <dbReference type="ChEBI" id="CHEBI:49883"/>
        <label>1</label>
    </ligand>
</feature>
<feature type="binding site" evidence="1">
    <location>
        <position position="825"/>
    </location>
    <ligand>
        <name>[4Fe-4S] cluster</name>
        <dbReference type="ChEBI" id="CHEBI:49883"/>
        <label>3</label>
    </ligand>
</feature>
<feature type="binding site" evidence="1">
    <location>
        <position position="828"/>
    </location>
    <ligand>
        <name>[4Fe-4S] cluster</name>
        <dbReference type="ChEBI" id="CHEBI:49883"/>
        <label>3</label>
    </ligand>
</feature>
<feature type="binding site" evidence="1">
    <location>
        <position position="853"/>
    </location>
    <ligand>
        <name>[4Fe-4S] cluster</name>
        <dbReference type="ChEBI" id="CHEBI:49883"/>
        <label>3</label>
    </ligand>
</feature>
<feature type="binding site" evidence="1">
    <location>
        <position position="1085"/>
    </location>
    <ligand>
        <name>[4Fe-4S] cluster</name>
        <dbReference type="ChEBI" id="CHEBI:49883"/>
        <label>3</label>
    </ligand>
</feature>
<feature type="sequence conflict" description="In Ref. 1; CAA54651." evidence="3" ref="1">
    <original>G</original>
    <variation>A</variation>
    <location>
        <position position="986"/>
    </location>
</feature>
<dbReference type="EC" id="1.2.7.-"/>
<dbReference type="EMBL" id="X77515">
    <property type="protein sequence ID" value="CAA54651.1"/>
    <property type="molecule type" value="Genomic_DNA"/>
</dbReference>
<dbReference type="EMBL" id="CP000230">
    <property type="protein sequence ID" value="ABC23198.1"/>
    <property type="status" value="ALT_INIT"/>
    <property type="molecule type" value="Genomic_DNA"/>
</dbReference>
<dbReference type="PIR" id="S70963">
    <property type="entry name" value="S70963"/>
</dbReference>
<dbReference type="RefSeq" id="YP_427485.1">
    <property type="nucleotide sequence ID" value="NC_007643.1"/>
</dbReference>
<dbReference type="SMR" id="Q53046"/>
<dbReference type="STRING" id="269796.Rru_A2398"/>
<dbReference type="EnsemblBacteria" id="ABC23198">
    <property type="protein sequence ID" value="ABC23198"/>
    <property type="gene ID" value="Rru_A2398"/>
</dbReference>
<dbReference type="KEGG" id="rru:Rru_A2398"/>
<dbReference type="PATRIC" id="fig|269796.9.peg.2500"/>
<dbReference type="eggNOG" id="COG0674">
    <property type="taxonomic scope" value="Bacteria"/>
</dbReference>
<dbReference type="eggNOG" id="COG1013">
    <property type="taxonomic scope" value="Bacteria"/>
</dbReference>
<dbReference type="eggNOG" id="COG1014">
    <property type="taxonomic scope" value="Bacteria"/>
</dbReference>
<dbReference type="HOGENOM" id="CLU_002569_0_0_5"/>
<dbReference type="PhylomeDB" id="Q53046"/>
<dbReference type="Proteomes" id="UP000001929">
    <property type="component" value="Chromosome"/>
</dbReference>
<dbReference type="GO" id="GO:0051539">
    <property type="term" value="F:4 iron, 4 sulfur cluster binding"/>
    <property type="evidence" value="ECO:0007669"/>
    <property type="project" value="UniProtKB-KW"/>
</dbReference>
<dbReference type="GO" id="GO:0005506">
    <property type="term" value="F:iron ion binding"/>
    <property type="evidence" value="ECO:0007669"/>
    <property type="project" value="InterPro"/>
</dbReference>
<dbReference type="GO" id="GO:0043873">
    <property type="term" value="F:pyruvate-flavodoxin oxidoreductase activity"/>
    <property type="evidence" value="ECO:0007669"/>
    <property type="project" value="RHEA"/>
</dbReference>
<dbReference type="GO" id="GO:0030976">
    <property type="term" value="F:thiamine pyrophosphate binding"/>
    <property type="evidence" value="ECO:0007669"/>
    <property type="project" value="InterPro"/>
</dbReference>
<dbReference type="GO" id="GO:0022900">
    <property type="term" value="P:electron transport chain"/>
    <property type="evidence" value="ECO:0007669"/>
    <property type="project" value="InterPro"/>
</dbReference>
<dbReference type="GO" id="GO:0009399">
    <property type="term" value="P:nitrogen fixation"/>
    <property type="evidence" value="ECO:0007669"/>
    <property type="project" value="UniProtKB-KW"/>
</dbReference>
<dbReference type="GO" id="GO:0006979">
    <property type="term" value="P:response to oxidative stress"/>
    <property type="evidence" value="ECO:0007669"/>
    <property type="project" value="TreeGrafter"/>
</dbReference>
<dbReference type="GO" id="GO:0044281">
    <property type="term" value="P:small molecule metabolic process"/>
    <property type="evidence" value="ECO:0007669"/>
    <property type="project" value="UniProtKB-ARBA"/>
</dbReference>
<dbReference type="CDD" id="cd03377">
    <property type="entry name" value="TPP_PFOR_PNO"/>
    <property type="match status" value="1"/>
</dbReference>
<dbReference type="CDD" id="cd07034">
    <property type="entry name" value="TPP_PYR_PFOR_IOR-alpha_like"/>
    <property type="match status" value="1"/>
</dbReference>
<dbReference type="FunFam" id="3.40.50.920:FF:000007">
    <property type="entry name" value="Pyruvate:ferredoxin (Flavodoxin) oxidoreductase"/>
    <property type="match status" value="1"/>
</dbReference>
<dbReference type="FunFam" id="3.40.50.970:FF:000012">
    <property type="entry name" value="Pyruvate:ferredoxin (Flavodoxin) oxidoreductase"/>
    <property type="match status" value="1"/>
</dbReference>
<dbReference type="FunFam" id="3.40.920.10:FF:000001">
    <property type="entry name" value="Pyruvate:ferredoxin (Flavodoxin) oxidoreductase"/>
    <property type="match status" value="1"/>
</dbReference>
<dbReference type="Gene3D" id="3.30.70.20">
    <property type="match status" value="1"/>
</dbReference>
<dbReference type="Gene3D" id="3.40.50.920">
    <property type="match status" value="1"/>
</dbReference>
<dbReference type="Gene3D" id="3.40.50.970">
    <property type="match status" value="2"/>
</dbReference>
<dbReference type="Gene3D" id="3.40.920.10">
    <property type="entry name" value="Pyruvate-ferredoxin oxidoreductase, PFOR, domain III"/>
    <property type="match status" value="1"/>
</dbReference>
<dbReference type="Gene3D" id="4.10.780.10">
    <property type="entry name" value="Pyruvate-flavodoxin oxidoreductase, EKR domain"/>
    <property type="match status" value="1"/>
</dbReference>
<dbReference type="InterPro" id="IPR017896">
    <property type="entry name" value="4Fe4S_Fe-S-bd"/>
</dbReference>
<dbReference type="InterPro" id="IPR017900">
    <property type="entry name" value="4Fe4S_Fe_S_CS"/>
</dbReference>
<dbReference type="InterPro" id="IPR033412">
    <property type="entry name" value="PFOR_II"/>
</dbReference>
<dbReference type="InterPro" id="IPR050722">
    <property type="entry name" value="Pyruvate:ferred/Flavod_OxRd"/>
</dbReference>
<dbReference type="InterPro" id="IPR037112">
    <property type="entry name" value="Pyrv-flavodox_OxR_EKR_sf"/>
</dbReference>
<dbReference type="InterPro" id="IPR019456">
    <property type="entry name" value="Pyrv-flavodox_OxRtase_EKR"/>
</dbReference>
<dbReference type="InterPro" id="IPR019752">
    <property type="entry name" value="Pyrv/ketoisovalerate_OxRed_cat"/>
</dbReference>
<dbReference type="InterPro" id="IPR002880">
    <property type="entry name" value="Pyrv_Fd/Flavodoxin_OxRdtase_N"/>
</dbReference>
<dbReference type="InterPro" id="IPR011895">
    <property type="entry name" value="Pyrv_flavodox_OxRed"/>
</dbReference>
<dbReference type="InterPro" id="IPR002869">
    <property type="entry name" value="Pyrv_flavodox_OxRed_cen"/>
</dbReference>
<dbReference type="InterPro" id="IPR029061">
    <property type="entry name" value="THDP-binding"/>
</dbReference>
<dbReference type="InterPro" id="IPR011766">
    <property type="entry name" value="TPP_enzyme_TPP-bd"/>
</dbReference>
<dbReference type="InterPro" id="IPR009014">
    <property type="entry name" value="Transketo_C/PFOR_II"/>
</dbReference>
<dbReference type="NCBIfam" id="TIGR02176">
    <property type="entry name" value="pyruv_ox_red"/>
    <property type="match status" value="1"/>
</dbReference>
<dbReference type="PANTHER" id="PTHR32154">
    <property type="entry name" value="PYRUVATE-FLAVODOXIN OXIDOREDUCTASE-RELATED"/>
    <property type="match status" value="1"/>
</dbReference>
<dbReference type="PANTHER" id="PTHR32154:SF0">
    <property type="entry name" value="PYRUVATE-FLAVODOXIN OXIDOREDUCTASE-RELATED"/>
    <property type="match status" value="1"/>
</dbReference>
<dbReference type="Pfam" id="PF10371">
    <property type="entry name" value="EKR"/>
    <property type="match status" value="1"/>
</dbReference>
<dbReference type="Pfam" id="PF12838">
    <property type="entry name" value="Fer4_7"/>
    <property type="match status" value="1"/>
</dbReference>
<dbReference type="Pfam" id="PF17147">
    <property type="entry name" value="PFOR_II"/>
    <property type="match status" value="1"/>
</dbReference>
<dbReference type="Pfam" id="PF01558">
    <property type="entry name" value="POR"/>
    <property type="match status" value="1"/>
</dbReference>
<dbReference type="Pfam" id="PF01855">
    <property type="entry name" value="POR_N"/>
    <property type="match status" value="1"/>
</dbReference>
<dbReference type="Pfam" id="PF02775">
    <property type="entry name" value="TPP_enzyme_C"/>
    <property type="match status" value="1"/>
</dbReference>
<dbReference type="PIRSF" id="PIRSF000159">
    <property type="entry name" value="NifJ"/>
    <property type="match status" value="1"/>
</dbReference>
<dbReference type="SMART" id="SM00890">
    <property type="entry name" value="EKR"/>
    <property type="match status" value="1"/>
</dbReference>
<dbReference type="SUPFAM" id="SSF54862">
    <property type="entry name" value="4Fe-4S ferredoxins"/>
    <property type="match status" value="1"/>
</dbReference>
<dbReference type="SUPFAM" id="SSF53323">
    <property type="entry name" value="Pyruvate-ferredoxin oxidoreductase, PFOR, domain III"/>
    <property type="match status" value="1"/>
</dbReference>
<dbReference type="SUPFAM" id="SSF52518">
    <property type="entry name" value="Thiamin diphosphate-binding fold (THDP-binding)"/>
    <property type="match status" value="2"/>
</dbReference>
<dbReference type="SUPFAM" id="SSF52922">
    <property type="entry name" value="TK C-terminal domain-like"/>
    <property type="match status" value="1"/>
</dbReference>
<dbReference type="PROSITE" id="PS00198">
    <property type="entry name" value="4FE4S_FER_1"/>
    <property type="match status" value="2"/>
</dbReference>
<dbReference type="PROSITE" id="PS51379">
    <property type="entry name" value="4FE4S_FER_2"/>
    <property type="match status" value="2"/>
</dbReference>
<protein>
    <recommendedName>
        <fullName>Pyruvate-flavodoxin oxidoreductase</fullName>
        <ecNumber>1.2.7.-</ecNumber>
    </recommendedName>
</protein>
<keyword id="KW-0004">4Fe-4S</keyword>
<keyword id="KW-0249">Electron transport</keyword>
<keyword id="KW-0408">Iron</keyword>
<keyword id="KW-0411">Iron-sulfur</keyword>
<keyword id="KW-0479">Metal-binding</keyword>
<keyword id="KW-0535">Nitrogen fixation</keyword>
<keyword id="KW-0560">Oxidoreductase</keyword>
<keyword id="KW-1185">Reference proteome</keyword>
<keyword id="KW-0677">Repeat</keyword>
<keyword id="KW-0813">Transport</keyword>
<accession>Q53046</accession>
<accession>Q2RRP7</accession>
<comment type="function">
    <text>Oxidoreductase required for the transfer of electrons from pyruvate to flavodoxin, which reduces nitrogenase.</text>
</comment>
<comment type="catalytic activity">
    <reaction>
        <text>oxidized [flavodoxin] + pyruvate + CoA + 2 H(+) = reduced [flavodoxin] + acetyl-CoA + CO2</text>
        <dbReference type="Rhea" id="RHEA:44140"/>
        <dbReference type="Rhea" id="RHEA-COMP:10622"/>
        <dbReference type="Rhea" id="RHEA-COMP:10623"/>
        <dbReference type="ChEBI" id="CHEBI:15361"/>
        <dbReference type="ChEBI" id="CHEBI:15378"/>
        <dbReference type="ChEBI" id="CHEBI:16526"/>
        <dbReference type="ChEBI" id="CHEBI:57287"/>
        <dbReference type="ChEBI" id="CHEBI:57288"/>
        <dbReference type="ChEBI" id="CHEBI:57618"/>
        <dbReference type="ChEBI" id="CHEBI:58210"/>
    </reaction>
</comment>
<comment type="cofactor">
    <cofactor evidence="1">
        <name>[4Fe-4S] cluster</name>
        <dbReference type="ChEBI" id="CHEBI:49883"/>
    </cofactor>
    <text evidence="1">Binds 3 [4Fe-4S] clusters per subunit.</text>
</comment>
<comment type="similarity">
    <text evidence="3">Belongs to the pyruvate:ferredoxin/flavodoxin oxidoreductase family.</text>
</comment>
<comment type="sequence caution" evidence="3">
    <conflict type="erroneous initiation">
        <sequence resource="EMBL-CDS" id="ABC23198"/>
    </conflict>
</comment>
<name>NIFJ_RHORT</name>